<protein>
    <recommendedName>
        <fullName>Uncharacterized acyl-CoA thioester hydrolase bbp_254</fullName>
        <ecNumber>3.1.2.-</ecNumber>
    </recommendedName>
</protein>
<reference key="1">
    <citation type="journal article" date="2003" name="Proc. Natl. Acad. Sci. U.S.A.">
        <title>Reductive genome evolution in Buchnera aphidicola.</title>
        <authorList>
            <person name="van Ham R.C.H.J."/>
            <person name="Kamerbeek J."/>
            <person name="Palacios C."/>
            <person name="Rausell C."/>
            <person name="Abascal F."/>
            <person name="Bastolla U."/>
            <person name="Fernandez J.M."/>
            <person name="Jimenez L."/>
            <person name="Postigo M."/>
            <person name="Silva F.J."/>
            <person name="Tamames J."/>
            <person name="Viguera E."/>
            <person name="Latorre A."/>
            <person name="Valencia A."/>
            <person name="Moran F."/>
            <person name="Moya A."/>
        </authorList>
    </citation>
    <scope>NUCLEOTIDE SEQUENCE [LARGE SCALE GENOMIC DNA]</scope>
    <source>
        <strain>Bp</strain>
    </source>
</reference>
<comment type="similarity">
    <text evidence="2">Belongs to the acyl coenzyme A hydrolase family.</text>
</comment>
<dbReference type="EC" id="3.1.2.-"/>
<dbReference type="EMBL" id="AE016826">
    <property type="protein sequence ID" value="AAO26981.1"/>
    <property type="molecule type" value="Genomic_DNA"/>
</dbReference>
<dbReference type="RefSeq" id="WP_011091382.1">
    <property type="nucleotide sequence ID" value="NC_004545.1"/>
</dbReference>
<dbReference type="SMR" id="Q89AL4"/>
<dbReference type="STRING" id="224915.bbp_254"/>
<dbReference type="KEGG" id="bab:bbp_254"/>
<dbReference type="eggNOG" id="COG1607">
    <property type="taxonomic scope" value="Bacteria"/>
</dbReference>
<dbReference type="HOGENOM" id="CLU_050164_2_0_6"/>
<dbReference type="OrthoDB" id="9801856at2"/>
<dbReference type="Proteomes" id="UP000000601">
    <property type="component" value="Chromosome"/>
</dbReference>
<dbReference type="GO" id="GO:0005829">
    <property type="term" value="C:cytosol"/>
    <property type="evidence" value="ECO:0007669"/>
    <property type="project" value="TreeGrafter"/>
</dbReference>
<dbReference type="GO" id="GO:0052816">
    <property type="term" value="F:long-chain fatty acyl-CoA hydrolase activity"/>
    <property type="evidence" value="ECO:0007669"/>
    <property type="project" value="TreeGrafter"/>
</dbReference>
<dbReference type="GO" id="GO:0006637">
    <property type="term" value="P:acyl-CoA metabolic process"/>
    <property type="evidence" value="ECO:0007669"/>
    <property type="project" value="TreeGrafter"/>
</dbReference>
<dbReference type="GO" id="GO:0009062">
    <property type="term" value="P:fatty acid catabolic process"/>
    <property type="evidence" value="ECO:0007669"/>
    <property type="project" value="TreeGrafter"/>
</dbReference>
<dbReference type="CDD" id="cd03442">
    <property type="entry name" value="BFIT_BACH"/>
    <property type="match status" value="1"/>
</dbReference>
<dbReference type="FunFam" id="3.10.129.10:FF:000008">
    <property type="entry name" value="Acyl-CoA thioester hydrolase"/>
    <property type="match status" value="1"/>
</dbReference>
<dbReference type="Gene3D" id="3.10.129.10">
    <property type="entry name" value="Hotdog Thioesterase"/>
    <property type="match status" value="1"/>
</dbReference>
<dbReference type="InterPro" id="IPR040170">
    <property type="entry name" value="Cytosol_ACT"/>
</dbReference>
<dbReference type="InterPro" id="IPR033120">
    <property type="entry name" value="HOTDOG_ACOT"/>
</dbReference>
<dbReference type="InterPro" id="IPR029069">
    <property type="entry name" value="HotDog_dom_sf"/>
</dbReference>
<dbReference type="InterPro" id="IPR006683">
    <property type="entry name" value="Thioestr_dom"/>
</dbReference>
<dbReference type="NCBIfam" id="NF007970">
    <property type="entry name" value="PRK10694.1"/>
    <property type="match status" value="1"/>
</dbReference>
<dbReference type="PANTHER" id="PTHR11049">
    <property type="entry name" value="ACYL COENZYME A THIOESTER HYDROLASE"/>
    <property type="match status" value="1"/>
</dbReference>
<dbReference type="PANTHER" id="PTHR11049:SF5">
    <property type="entry name" value="ACYL-COA THIOESTER HYDROLASE YCIA"/>
    <property type="match status" value="1"/>
</dbReference>
<dbReference type="Pfam" id="PF03061">
    <property type="entry name" value="4HBT"/>
    <property type="match status" value="1"/>
</dbReference>
<dbReference type="SUPFAM" id="SSF54637">
    <property type="entry name" value="Thioesterase/thiol ester dehydrase-isomerase"/>
    <property type="match status" value="1"/>
</dbReference>
<dbReference type="PROSITE" id="PS51770">
    <property type="entry name" value="HOTDOG_ACOT"/>
    <property type="match status" value="1"/>
</dbReference>
<organism>
    <name type="scientific">Buchnera aphidicola subsp. Baizongia pistaciae (strain Bp)</name>
    <dbReference type="NCBI Taxonomy" id="224915"/>
    <lineage>
        <taxon>Bacteria</taxon>
        <taxon>Pseudomonadati</taxon>
        <taxon>Pseudomonadota</taxon>
        <taxon>Gammaproteobacteria</taxon>
        <taxon>Enterobacterales</taxon>
        <taxon>Erwiniaceae</taxon>
        <taxon>Buchnera</taxon>
    </lineage>
</organism>
<accession>Q89AL4</accession>
<feature type="chain" id="PRO_0000053825" description="Uncharacterized acyl-CoA thioester hydrolase bbp_254">
    <location>
        <begin position="1"/>
        <end position="135"/>
    </location>
</feature>
<feature type="domain" description="HotDog ACOT-type" evidence="1">
    <location>
        <begin position="8"/>
        <end position="123"/>
    </location>
</feature>
<keyword id="KW-0378">Hydrolase</keyword>
<keyword id="KW-1185">Reference proteome</keyword>
<proteinExistence type="inferred from homology"/>
<name>Y254_BUCBP</name>
<evidence type="ECO:0000255" key="1">
    <source>
        <dbReference type="PROSITE-ProRule" id="PRU01106"/>
    </source>
</evidence>
<evidence type="ECO:0000305" key="2"/>
<gene>
    <name type="ordered locus">bbp_254</name>
</gene>
<sequence length="135" mass="14690">MNIKNQKPKGKMVLRTLAMPADTNANGDIFGGWIMSQMDIGGAILAKEIARGRVVTVSVNGMTFLKSVSVGDVVSCYAHCIRTGNTSITIKIEVWIKKVSSEPLGKFYCTTEAIFVYVAVDEFGQPKTLLPFSII</sequence>